<feature type="chain" id="PRO_0000164499" description="Uridine kinase">
    <location>
        <begin position="1"/>
        <end position="212"/>
    </location>
</feature>
<feature type="binding site" evidence="1">
    <location>
        <begin position="12"/>
        <end position="19"/>
    </location>
    <ligand>
        <name>ATP</name>
        <dbReference type="ChEBI" id="CHEBI:30616"/>
    </ligand>
</feature>
<reference key="1">
    <citation type="journal article" date="2001" name="Science">
        <title>Complete genome sequence of a virulent isolate of Streptococcus pneumoniae.</title>
        <authorList>
            <person name="Tettelin H."/>
            <person name="Nelson K.E."/>
            <person name="Paulsen I.T."/>
            <person name="Eisen J.A."/>
            <person name="Read T.D."/>
            <person name="Peterson S.N."/>
            <person name="Heidelberg J.F."/>
            <person name="DeBoy R.T."/>
            <person name="Haft D.H."/>
            <person name="Dodson R.J."/>
            <person name="Durkin A.S."/>
            <person name="Gwinn M.L."/>
            <person name="Kolonay J.F."/>
            <person name="Nelson W.C."/>
            <person name="Peterson J.D."/>
            <person name="Umayam L.A."/>
            <person name="White O."/>
            <person name="Salzberg S.L."/>
            <person name="Lewis M.R."/>
            <person name="Radune D."/>
            <person name="Holtzapple E.K."/>
            <person name="Khouri H.M."/>
            <person name="Wolf A.M."/>
            <person name="Utterback T.R."/>
            <person name="Hansen C.L."/>
            <person name="McDonald L.A."/>
            <person name="Feldblyum T.V."/>
            <person name="Angiuoli S.V."/>
            <person name="Dickinson T."/>
            <person name="Hickey E.K."/>
            <person name="Holt I.E."/>
            <person name="Loftus B.J."/>
            <person name="Yang F."/>
            <person name="Smith H.O."/>
            <person name="Venter J.C."/>
            <person name="Dougherty B.A."/>
            <person name="Morrison D.A."/>
            <person name="Hollingshead S.K."/>
            <person name="Fraser C.M."/>
        </authorList>
    </citation>
    <scope>NUCLEOTIDE SEQUENCE [LARGE SCALE GENOMIC DNA]</scope>
    <source>
        <strain>ATCC BAA-334 / TIGR4</strain>
    </source>
</reference>
<organism>
    <name type="scientific">Streptococcus pneumoniae serotype 4 (strain ATCC BAA-334 / TIGR4)</name>
    <dbReference type="NCBI Taxonomy" id="170187"/>
    <lineage>
        <taxon>Bacteria</taxon>
        <taxon>Bacillati</taxon>
        <taxon>Bacillota</taxon>
        <taxon>Bacilli</taxon>
        <taxon>Lactobacillales</taxon>
        <taxon>Streptococcaceae</taxon>
        <taxon>Streptococcus</taxon>
    </lineage>
</organism>
<gene>
    <name evidence="1" type="primary">udk</name>
    <name type="ordered locus">SP_1208</name>
</gene>
<evidence type="ECO:0000255" key="1">
    <source>
        <dbReference type="HAMAP-Rule" id="MF_00551"/>
    </source>
</evidence>
<comment type="catalytic activity">
    <reaction evidence="1">
        <text>uridine + ATP = UMP + ADP + H(+)</text>
        <dbReference type="Rhea" id="RHEA:16825"/>
        <dbReference type="ChEBI" id="CHEBI:15378"/>
        <dbReference type="ChEBI" id="CHEBI:16704"/>
        <dbReference type="ChEBI" id="CHEBI:30616"/>
        <dbReference type="ChEBI" id="CHEBI:57865"/>
        <dbReference type="ChEBI" id="CHEBI:456216"/>
        <dbReference type="EC" id="2.7.1.48"/>
    </reaction>
</comment>
<comment type="catalytic activity">
    <reaction evidence="1">
        <text>cytidine + ATP = CMP + ADP + H(+)</text>
        <dbReference type="Rhea" id="RHEA:24674"/>
        <dbReference type="ChEBI" id="CHEBI:15378"/>
        <dbReference type="ChEBI" id="CHEBI:17562"/>
        <dbReference type="ChEBI" id="CHEBI:30616"/>
        <dbReference type="ChEBI" id="CHEBI:60377"/>
        <dbReference type="ChEBI" id="CHEBI:456216"/>
        <dbReference type="EC" id="2.7.1.48"/>
    </reaction>
</comment>
<comment type="pathway">
    <text evidence="1">Pyrimidine metabolism; CTP biosynthesis via salvage pathway; CTP from cytidine: step 1/3.</text>
</comment>
<comment type="pathway">
    <text evidence="1">Pyrimidine metabolism; UMP biosynthesis via salvage pathway; UMP from uridine: step 1/1.</text>
</comment>
<comment type="interaction">
    <interactant intactId="EBI-11615933">
        <id>P67413</id>
    </interactant>
    <interactant intactId="EBI-11615908">
        <id>P15057</id>
        <label>CPL1</label>
    </interactant>
    <organismsDiffer>true</organismsDiffer>
    <experiments>2</experiments>
</comment>
<comment type="subcellular location">
    <subcellularLocation>
        <location evidence="1">Cytoplasm</location>
    </subcellularLocation>
</comment>
<comment type="similarity">
    <text evidence="1">Belongs to the uridine kinase family.</text>
</comment>
<name>URK_STRPN</name>
<accession>P67413</accession>
<accession>Q97QJ7</accession>
<dbReference type="EC" id="2.7.1.48" evidence="1"/>
<dbReference type="EMBL" id="AE005672">
    <property type="protein sequence ID" value="AAK75315.1"/>
    <property type="molecule type" value="Genomic_DNA"/>
</dbReference>
<dbReference type="PIR" id="B95140">
    <property type="entry name" value="B95140"/>
</dbReference>
<dbReference type="RefSeq" id="WP_001181378.1">
    <property type="nucleotide sequence ID" value="NZ_CP155539.1"/>
</dbReference>
<dbReference type="SMR" id="P67413"/>
<dbReference type="IntAct" id="P67413">
    <property type="interactions" value="1"/>
</dbReference>
<dbReference type="PaxDb" id="170187-SP_1208"/>
<dbReference type="EnsemblBacteria" id="AAK75315">
    <property type="protein sequence ID" value="AAK75315"/>
    <property type="gene ID" value="SP_1208"/>
</dbReference>
<dbReference type="GeneID" id="45653496"/>
<dbReference type="KEGG" id="spn:SP_1208"/>
<dbReference type="eggNOG" id="COG0572">
    <property type="taxonomic scope" value="Bacteria"/>
</dbReference>
<dbReference type="PhylomeDB" id="P67413"/>
<dbReference type="BioCyc" id="SPNE170187:G1FZB-1224-MONOMER"/>
<dbReference type="UniPathway" id="UPA00574">
    <property type="reaction ID" value="UER00637"/>
</dbReference>
<dbReference type="UniPathway" id="UPA00579">
    <property type="reaction ID" value="UER00640"/>
</dbReference>
<dbReference type="Proteomes" id="UP000000585">
    <property type="component" value="Chromosome"/>
</dbReference>
<dbReference type="GO" id="GO:0005737">
    <property type="term" value="C:cytoplasm"/>
    <property type="evidence" value="ECO:0007669"/>
    <property type="project" value="UniProtKB-SubCell"/>
</dbReference>
<dbReference type="GO" id="GO:0005524">
    <property type="term" value="F:ATP binding"/>
    <property type="evidence" value="ECO:0007669"/>
    <property type="project" value="UniProtKB-UniRule"/>
</dbReference>
<dbReference type="GO" id="GO:0043771">
    <property type="term" value="F:cytidine kinase activity"/>
    <property type="evidence" value="ECO:0007669"/>
    <property type="project" value="RHEA"/>
</dbReference>
<dbReference type="GO" id="GO:0004849">
    <property type="term" value="F:uridine kinase activity"/>
    <property type="evidence" value="ECO:0007669"/>
    <property type="project" value="UniProtKB-UniRule"/>
</dbReference>
<dbReference type="GO" id="GO:0044211">
    <property type="term" value="P:CTP salvage"/>
    <property type="evidence" value="ECO:0007669"/>
    <property type="project" value="UniProtKB-UniRule"/>
</dbReference>
<dbReference type="GO" id="GO:0044206">
    <property type="term" value="P:UMP salvage"/>
    <property type="evidence" value="ECO:0007669"/>
    <property type="project" value="UniProtKB-UniRule"/>
</dbReference>
<dbReference type="CDD" id="cd02023">
    <property type="entry name" value="UMPK"/>
    <property type="match status" value="1"/>
</dbReference>
<dbReference type="Gene3D" id="3.40.50.300">
    <property type="entry name" value="P-loop containing nucleotide triphosphate hydrolases"/>
    <property type="match status" value="1"/>
</dbReference>
<dbReference type="HAMAP" id="MF_00551">
    <property type="entry name" value="Uridine_kinase"/>
    <property type="match status" value="1"/>
</dbReference>
<dbReference type="InterPro" id="IPR027417">
    <property type="entry name" value="P-loop_NTPase"/>
</dbReference>
<dbReference type="InterPro" id="IPR006083">
    <property type="entry name" value="PRK/URK"/>
</dbReference>
<dbReference type="InterPro" id="IPR026008">
    <property type="entry name" value="Uridine_kinase"/>
</dbReference>
<dbReference type="InterPro" id="IPR000764">
    <property type="entry name" value="Uridine_kinase-like"/>
</dbReference>
<dbReference type="NCBIfam" id="NF004018">
    <property type="entry name" value="PRK05480.1"/>
    <property type="match status" value="1"/>
</dbReference>
<dbReference type="NCBIfam" id="TIGR00235">
    <property type="entry name" value="udk"/>
    <property type="match status" value="1"/>
</dbReference>
<dbReference type="PANTHER" id="PTHR10285">
    <property type="entry name" value="URIDINE KINASE"/>
    <property type="match status" value="1"/>
</dbReference>
<dbReference type="Pfam" id="PF00485">
    <property type="entry name" value="PRK"/>
    <property type="match status" value="1"/>
</dbReference>
<dbReference type="PRINTS" id="PR00988">
    <property type="entry name" value="URIDINKINASE"/>
</dbReference>
<dbReference type="SUPFAM" id="SSF52540">
    <property type="entry name" value="P-loop containing nucleoside triphosphate hydrolases"/>
    <property type="match status" value="1"/>
</dbReference>
<proteinExistence type="evidence at protein level"/>
<protein>
    <recommendedName>
        <fullName evidence="1">Uridine kinase</fullName>
        <ecNumber evidence="1">2.7.1.48</ecNumber>
    </recommendedName>
    <alternativeName>
        <fullName evidence="1">Cytidine monophosphokinase</fullName>
    </alternativeName>
    <alternativeName>
        <fullName evidence="1">Uridine monophosphokinase</fullName>
    </alternativeName>
</protein>
<sequence length="212" mass="24466">MQNRPIIIGVTGGSGGGKTSVSRAILSHFPDEKISMIEHDSYYKDQSHLTFEERVKTNYDHPFAFDTDLMIEQIKELLAGRPVDIPTYDYTEHTRSSKTYRQEPQDVFIVEGILVLEDKRLRDLMDIKIFVDTDDDVRIIRRIKRDMEERGRSLDSVINQYLGVVKPMYHQFIESTKRYADIVIPEGVSNTVAIDLLTTKIAKILEEARNSK</sequence>
<keyword id="KW-0067">ATP-binding</keyword>
<keyword id="KW-0963">Cytoplasm</keyword>
<keyword id="KW-0418">Kinase</keyword>
<keyword id="KW-0547">Nucleotide-binding</keyword>
<keyword id="KW-1185">Reference proteome</keyword>
<keyword id="KW-0808">Transferase</keyword>